<organismHost>
    <name type="scientific">Aves</name>
    <dbReference type="NCBI Taxonomy" id="8782"/>
</organismHost>
<reference key="1">
    <citation type="journal article" date="1990" name="Proc. Natl. Acad. Sci. U.S.A.">
        <title>Mutation in NS2, a nonstructural protein of influenza A virus, extragenically causes aberrant replication and expression of the PA gene and leads to generation of defective interfering particles.</title>
        <authorList>
            <person name="Odagiri T."/>
            <person name="Tobita K."/>
        </authorList>
    </citation>
    <scope>NUCLEOTIDE SEQUENCE [GENOMIC RNA]</scope>
</reference>
<accession>Q04266</accession>
<feature type="chain" id="PRO_0000079013" description="Nuclear export protein">
    <location>
        <begin position="1"/>
        <end position="121"/>
    </location>
</feature>
<feature type="short sequence motif" description="Nuclear export signal" evidence="1">
    <location>
        <begin position="12"/>
        <end position="21"/>
    </location>
</feature>
<feature type="short sequence motif" description="Nuclear export signal" evidence="1">
    <location>
        <begin position="85"/>
        <end position="94"/>
    </location>
</feature>
<sequence>MDSNTVSSFQDILLRMSKMQLGSSSEDLNGMTTQFESLKLYRDSLGEAVMRMGDLHSLQNRNGKWREQLGQKFEEIRWLIEEVRHRLKTTENSFEQITFMQALQLLFEVEQEIRTFSFQLI</sequence>
<protein>
    <recommendedName>
        <fullName evidence="1">Nuclear export protein</fullName>
        <shortName evidence="1">NEP</shortName>
    </recommendedName>
    <alternativeName>
        <fullName evidence="1">Non-structural protein 2</fullName>
        <shortName evidence="1">NS2</shortName>
    </alternativeName>
</protein>
<organism>
    <name type="scientific">Influenza A virus (strain A/Wa-182)</name>
    <dbReference type="NCBI Taxonomy" id="38985"/>
    <lineage>
        <taxon>Viruses</taxon>
        <taxon>Riboviria</taxon>
        <taxon>Orthornavirae</taxon>
        <taxon>Negarnaviricota</taxon>
        <taxon>Polyploviricotina</taxon>
        <taxon>Insthoviricetes</taxon>
        <taxon>Articulavirales</taxon>
        <taxon>Orthomyxoviridae</taxon>
        <taxon>Alphainfluenzavirus</taxon>
        <taxon>Alphainfluenzavirus influenzae</taxon>
        <taxon>Influenza A virus</taxon>
    </lineage>
</organism>
<evidence type="ECO:0000255" key="1">
    <source>
        <dbReference type="HAMAP-Rule" id="MF_04067"/>
    </source>
</evidence>
<keyword id="KW-0025">Alternative splicing</keyword>
<keyword id="KW-1048">Host nucleus</keyword>
<keyword id="KW-0945">Host-virus interaction</keyword>
<keyword id="KW-0813">Transport</keyword>
<keyword id="KW-0946">Virion</keyword>
<dbReference type="EMBL" id="M35094">
    <property type="protein sequence ID" value="AAA43687.1"/>
    <property type="molecule type" value="Genomic_RNA"/>
</dbReference>
<dbReference type="SMR" id="Q04266"/>
<dbReference type="GO" id="GO:0042025">
    <property type="term" value="C:host cell nucleus"/>
    <property type="evidence" value="ECO:0007669"/>
    <property type="project" value="UniProtKB-SubCell"/>
</dbReference>
<dbReference type="GO" id="GO:0044423">
    <property type="term" value="C:virion component"/>
    <property type="evidence" value="ECO:0007669"/>
    <property type="project" value="UniProtKB-UniRule"/>
</dbReference>
<dbReference type="GO" id="GO:0039675">
    <property type="term" value="P:exit of virus from host cell nucleus through nuclear pore"/>
    <property type="evidence" value="ECO:0007669"/>
    <property type="project" value="UniProtKB-UniRule"/>
</dbReference>
<dbReference type="Gene3D" id="1.10.287.230">
    <property type="match status" value="1"/>
</dbReference>
<dbReference type="Gene3D" id="1.10.287.10">
    <property type="entry name" value="S15/NS1, RNA-binding"/>
    <property type="match status" value="1"/>
</dbReference>
<dbReference type="HAMAP" id="MF_04067">
    <property type="entry name" value="INFV_NEP"/>
    <property type="match status" value="1"/>
</dbReference>
<dbReference type="InterPro" id="IPR000968">
    <property type="entry name" value="Flu_NS2"/>
</dbReference>
<dbReference type="Pfam" id="PF00601">
    <property type="entry name" value="Flu_NS2"/>
    <property type="match status" value="1"/>
</dbReference>
<dbReference type="SUPFAM" id="SSF101156">
    <property type="entry name" value="Nonstructural protein ns2, Nep, M1-binding domain"/>
    <property type="match status" value="1"/>
</dbReference>
<gene>
    <name evidence="1" type="primary">NS</name>
</gene>
<proteinExistence type="inferred from homology"/>
<comment type="function">
    <text evidence="1">Mediates the nuclear export of encapsidated genomic RNAs (ribonucleoproteins, RNPs). Acts as an adapter between viral RNPs complexes and the nuclear export machinery of the cell. Possesses no intrinsic RNA-binding activity, but includes a C-terminal M1-binding domain. This domain is believed to allow recognition of RNPs bound to the protein M1. Since protein M1 is not available in large quantities before late stages of infection, such an indirect recognition mechanism probably ensures that genomic RNPs are not exported from the host nucleus until sufficient quantities of viral mRNA and progeny genomic RNA have been synthesized. Furthermore, the RNPs enter the host cytoplasm only when associated with the M1 protein that is necessary to guide them to the plasma membrane. May down-regulate viral RNA synthesis when overproduced.</text>
</comment>
<comment type="subunit">
    <text evidence="1">Interacts with protein M1. May interact with host nucleoporin RAB/HRB and exportin XPO1/CRM1.</text>
</comment>
<comment type="subcellular location">
    <subcellularLocation>
        <location evidence="1">Virion</location>
    </subcellularLocation>
    <subcellularLocation>
        <location evidence="1">Host nucleus</location>
    </subcellularLocation>
</comment>
<comment type="alternative products">
    <event type="alternative splicing"/>
    <isoform>
        <id>Q04266-1</id>
        <name>NEP</name>
        <name>NS2</name>
        <sequence type="displayed"/>
    </isoform>
    <isoform>
        <id>P69278-1</id>
        <name>NS1</name>
        <sequence type="external"/>
    </isoform>
</comment>
<comment type="miscellaneous">
    <text>Average number present in a viral particle is estimated to be 130-200 molecules.</text>
</comment>
<comment type="similarity">
    <text evidence="1">Belongs to the influenza viruses NEP family.</text>
</comment>
<name>NEP_I000W</name>